<keyword id="KW-0007">Acetylation</keyword>
<keyword id="KW-0067">ATP-binding</keyword>
<keyword id="KW-0436">Ligase</keyword>
<keyword id="KW-0460">Magnesium</keyword>
<keyword id="KW-0479">Metal-binding</keyword>
<keyword id="KW-0547">Nucleotide-binding</keyword>
<keyword id="KW-1185">Reference proteome</keyword>
<proteinExistence type="inferred from homology"/>
<gene>
    <name evidence="1" type="primary">acsA</name>
    <name type="ordered locus">HEAR0921</name>
</gene>
<organism>
    <name type="scientific">Herminiimonas arsenicoxydans</name>
    <dbReference type="NCBI Taxonomy" id="204773"/>
    <lineage>
        <taxon>Bacteria</taxon>
        <taxon>Pseudomonadati</taxon>
        <taxon>Pseudomonadota</taxon>
        <taxon>Betaproteobacteria</taxon>
        <taxon>Burkholderiales</taxon>
        <taxon>Oxalobacteraceae</taxon>
        <taxon>Herminiimonas</taxon>
    </lineage>
</organism>
<sequence>MSSIESFKQEGRVFDSPVDFVNNAAISGMEAYRALCAEAADDYEGFWARLAQQNLHWTKPFTKKLDESNAPFYKWFEDGELNVSWNCLDRHLHNGNADKVAIIFEADDGNVTRITYKELHERVCKFANGLKSLSINKGDRVIIYMPMSIDGIAAMQACARIGATHSVVFGGFSAKSLHERIIDAGAVAVLTADYQVRGGKNLPLKAIVDEALAMGGCDTIRNVVVYKRTGGAVDFVERRDIWLHELVEQRTSECAPEPVGAEHPLFILYTSGSTGKPKGVQHSSAGYLLWAMLTMKWVFDIKPNDVYWCTADIGWVTGHTYVTYGPLAVGATQIVFEGVPMYPNAGRFWEMVQKHKVSIFYTAPTAIRSLIKAAEADPSTHPSKYDLSSLRLLGSVGEPINPEAWMWYYKNIGGERCPIVDTFWQTETGGHVISPLPGATPMVPGSCTLPLPGIIAAVVDDGGHDLPNGKGGLLVIKRPWPAMIRNIWNDPERFEKSYFPHELGGRTYLAGDGAIRNEETGYFTITGRIDDVLNISGHRMGTAEIESALVANPMVAEAAVVGKPDETTGESICAFVVLKRVRPEGDEAKQIAKELRDWVAKEIGPIAKPKEIRFGDNLPKTRSGKIMRRLLRVLAKDEDITQDISTLENPAILEQLKQAQ</sequence>
<accession>A4G3L8</accession>
<reference key="1">
    <citation type="journal article" date="2007" name="PLoS Genet.">
        <title>A tale of two oxidation states: bacterial colonization of arsenic-rich environments.</title>
        <authorList>
            <person name="Muller D."/>
            <person name="Medigue C."/>
            <person name="Koechler S."/>
            <person name="Barbe V."/>
            <person name="Barakat M."/>
            <person name="Talla E."/>
            <person name="Bonnefoy V."/>
            <person name="Krin E."/>
            <person name="Arsene-Ploetze F."/>
            <person name="Carapito C."/>
            <person name="Chandler M."/>
            <person name="Cournoyer B."/>
            <person name="Cruveiller S."/>
            <person name="Dossat C."/>
            <person name="Duval S."/>
            <person name="Heymann M."/>
            <person name="Leize E."/>
            <person name="Lieutaud A."/>
            <person name="Lievremont D."/>
            <person name="Makita Y."/>
            <person name="Mangenot S."/>
            <person name="Nitschke W."/>
            <person name="Ortet P."/>
            <person name="Perdrial N."/>
            <person name="Schoepp B."/>
            <person name="Siguier P."/>
            <person name="Simeonova D.D."/>
            <person name="Rouy Z."/>
            <person name="Segurens B."/>
            <person name="Turlin E."/>
            <person name="Vallenet D."/>
            <person name="van Dorsselaer A."/>
            <person name="Weiss S."/>
            <person name="Weissenbach J."/>
            <person name="Lett M.-C."/>
            <person name="Danchin A."/>
            <person name="Bertin P.N."/>
        </authorList>
    </citation>
    <scope>NUCLEOTIDE SEQUENCE [LARGE SCALE GENOMIC DNA]</scope>
    <source>
        <strain>ULPAs1</strain>
    </source>
</reference>
<dbReference type="EC" id="6.2.1.1" evidence="1"/>
<dbReference type="EMBL" id="CU207211">
    <property type="protein sequence ID" value="CAL61105.1"/>
    <property type="molecule type" value="Genomic_DNA"/>
</dbReference>
<dbReference type="SMR" id="A4G3L8"/>
<dbReference type="STRING" id="204773.HEAR0921"/>
<dbReference type="KEGG" id="har:HEAR0921"/>
<dbReference type="eggNOG" id="COG0365">
    <property type="taxonomic scope" value="Bacteria"/>
</dbReference>
<dbReference type="HOGENOM" id="CLU_000022_3_6_4"/>
<dbReference type="OrthoDB" id="9766486at2"/>
<dbReference type="Proteomes" id="UP000006697">
    <property type="component" value="Chromosome"/>
</dbReference>
<dbReference type="GO" id="GO:0005829">
    <property type="term" value="C:cytosol"/>
    <property type="evidence" value="ECO:0007669"/>
    <property type="project" value="TreeGrafter"/>
</dbReference>
<dbReference type="GO" id="GO:0003987">
    <property type="term" value="F:acetate-CoA ligase activity"/>
    <property type="evidence" value="ECO:0007669"/>
    <property type="project" value="UniProtKB-UniRule"/>
</dbReference>
<dbReference type="GO" id="GO:0016208">
    <property type="term" value="F:AMP binding"/>
    <property type="evidence" value="ECO:0007669"/>
    <property type="project" value="InterPro"/>
</dbReference>
<dbReference type="GO" id="GO:0005524">
    <property type="term" value="F:ATP binding"/>
    <property type="evidence" value="ECO:0007669"/>
    <property type="project" value="UniProtKB-KW"/>
</dbReference>
<dbReference type="GO" id="GO:0046872">
    <property type="term" value="F:metal ion binding"/>
    <property type="evidence" value="ECO:0007669"/>
    <property type="project" value="UniProtKB-KW"/>
</dbReference>
<dbReference type="GO" id="GO:0019427">
    <property type="term" value="P:acetyl-CoA biosynthetic process from acetate"/>
    <property type="evidence" value="ECO:0007669"/>
    <property type="project" value="InterPro"/>
</dbReference>
<dbReference type="CDD" id="cd05966">
    <property type="entry name" value="ACS"/>
    <property type="match status" value="1"/>
</dbReference>
<dbReference type="FunFam" id="3.40.50.12780:FF:000001">
    <property type="entry name" value="Acetyl-coenzyme A synthetase"/>
    <property type="match status" value="1"/>
</dbReference>
<dbReference type="Gene3D" id="3.30.300.30">
    <property type="match status" value="1"/>
</dbReference>
<dbReference type="Gene3D" id="3.40.50.12780">
    <property type="entry name" value="N-terminal domain of ligase-like"/>
    <property type="match status" value="1"/>
</dbReference>
<dbReference type="HAMAP" id="MF_01123">
    <property type="entry name" value="Ac_CoA_synth"/>
    <property type="match status" value="1"/>
</dbReference>
<dbReference type="InterPro" id="IPR011904">
    <property type="entry name" value="Ac_CoA_lig"/>
</dbReference>
<dbReference type="InterPro" id="IPR032387">
    <property type="entry name" value="ACAS_N"/>
</dbReference>
<dbReference type="InterPro" id="IPR025110">
    <property type="entry name" value="AMP-bd_C"/>
</dbReference>
<dbReference type="InterPro" id="IPR045851">
    <property type="entry name" value="AMP-bd_C_sf"/>
</dbReference>
<dbReference type="InterPro" id="IPR020845">
    <property type="entry name" value="AMP-binding_CS"/>
</dbReference>
<dbReference type="InterPro" id="IPR000873">
    <property type="entry name" value="AMP-dep_synth/lig_dom"/>
</dbReference>
<dbReference type="InterPro" id="IPR042099">
    <property type="entry name" value="ANL_N_sf"/>
</dbReference>
<dbReference type="NCBIfam" id="TIGR02188">
    <property type="entry name" value="Ac_CoA_lig_AcsA"/>
    <property type="match status" value="1"/>
</dbReference>
<dbReference type="NCBIfam" id="NF001208">
    <property type="entry name" value="PRK00174.1"/>
    <property type="match status" value="1"/>
</dbReference>
<dbReference type="PANTHER" id="PTHR24095">
    <property type="entry name" value="ACETYL-COENZYME A SYNTHETASE"/>
    <property type="match status" value="1"/>
</dbReference>
<dbReference type="PANTHER" id="PTHR24095:SF14">
    <property type="entry name" value="ACETYL-COENZYME A SYNTHETASE 1"/>
    <property type="match status" value="1"/>
</dbReference>
<dbReference type="Pfam" id="PF16177">
    <property type="entry name" value="ACAS_N"/>
    <property type="match status" value="1"/>
</dbReference>
<dbReference type="Pfam" id="PF00501">
    <property type="entry name" value="AMP-binding"/>
    <property type="match status" value="1"/>
</dbReference>
<dbReference type="Pfam" id="PF13193">
    <property type="entry name" value="AMP-binding_C"/>
    <property type="match status" value="1"/>
</dbReference>
<dbReference type="SUPFAM" id="SSF56801">
    <property type="entry name" value="Acetyl-CoA synthetase-like"/>
    <property type="match status" value="1"/>
</dbReference>
<dbReference type="PROSITE" id="PS00455">
    <property type="entry name" value="AMP_BINDING"/>
    <property type="match status" value="1"/>
</dbReference>
<protein>
    <recommendedName>
        <fullName evidence="1">Acetyl-coenzyme A synthetase</fullName>
        <shortName evidence="1">AcCoA synthetase</shortName>
        <shortName evidence="1">Acs</shortName>
        <ecNumber evidence="1">6.2.1.1</ecNumber>
    </recommendedName>
    <alternativeName>
        <fullName evidence="1">Acetate--CoA ligase</fullName>
    </alternativeName>
    <alternativeName>
        <fullName evidence="1">Acyl-activating enzyme</fullName>
    </alternativeName>
</protein>
<comment type="function">
    <text evidence="1">Catalyzes the conversion of acetate into acetyl-CoA (AcCoA), an essential intermediate at the junction of anabolic and catabolic pathways. AcsA undergoes a two-step reaction. In the first half reaction, AcsA combines acetate with ATP to form acetyl-adenylate (AcAMP) intermediate. In the second half reaction, it can then transfer the acetyl group from AcAMP to the sulfhydryl group of CoA, forming the product AcCoA.</text>
</comment>
<comment type="catalytic activity">
    <reaction evidence="1">
        <text>acetate + ATP + CoA = acetyl-CoA + AMP + diphosphate</text>
        <dbReference type="Rhea" id="RHEA:23176"/>
        <dbReference type="ChEBI" id="CHEBI:30089"/>
        <dbReference type="ChEBI" id="CHEBI:30616"/>
        <dbReference type="ChEBI" id="CHEBI:33019"/>
        <dbReference type="ChEBI" id="CHEBI:57287"/>
        <dbReference type="ChEBI" id="CHEBI:57288"/>
        <dbReference type="ChEBI" id="CHEBI:456215"/>
        <dbReference type="EC" id="6.2.1.1"/>
    </reaction>
</comment>
<comment type="cofactor">
    <cofactor evidence="1">
        <name>Mg(2+)</name>
        <dbReference type="ChEBI" id="CHEBI:18420"/>
    </cofactor>
</comment>
<comment type="PTM">
    <text evidence="1">Acetylated. Deacetylation by the SIR2-homolog deacetylase activates the enzyme.</text>
</comment>
<comment type="similarity">
    <text evidence="1">Belongs to the ATP-dependent AMP-binding enzyme family.</text>
</comment>
<feature type="chain" id="PRO_1000065294" description="Acetyl-coenzyme A synthetase">
    <location>
        <begin position="1"/>
        <end position="660"/>
    </location>
</feature>
<feature type="binding site" evidence="1">
    <location>
        <begin position="197"/>
        <end position="200"/>
    </location>
    <ligand>
        <name>CoA</name>
        <dbReference type="ChEBI" id="CHEBI:57287"/>
    </ligand>
</feature>
<feature type="binding site" evidence="1">
    <location>
        <position position="317"/>
    </location>
    <ligand>
        <name>CoA</name>
        <dbReference type="ChEBI" id="CHEBI:57287"/>
    </ligand>
</feature>
<feature type="binding site" evidence="1">
    <location>
        <begin position="397"/>
        <end position="399"/>
    </location>
    <ligand>
        <name>ATP</name>
        <dbReference type="ChEBI" id="CHEBI:30616"/>
    </ligand>
</feature>
<feature type="binding site" evidence="1">
    <location>
        <begin position="421"/>
        <end position="426"/>
    </location>
    <ligand>
        <name>ATP</name>
        <dbReference type="ChEBI" id="CHEBI:30616"/>
    </ligand>
</feature>
<feature type="binding site" evidence="1">
    <location>
        <position position="512"/>
    </location>
    <ligand>
        <name>ATP</name>
        <dbReference type="ChEBI" id="CHEBI:30616"/>
    </ligand>
</feature>
<feature type="binding site" evidence="1">
    <location>
        <position position="528"/>
    </location>
    <ligand>
        <name>ATP</name>
        <dbReference type="ChEBI" id="CHEBI:30616"/>
    </ligand>
</feature>
<feature type="binding site" evidence="1">
    <location>
        <position position="536"/>
    </location>
    <ligand>
        <name>CoA</name>
        <dbReference type="ChEBI" id="CHEBI:57287"/>
    </ligand>
</feature>
<feature type="binding site" evidence="1">
    <location>
        <position position="539"/>
    </location>
    <ligand>
        <name>ATP</name>
        <dbReference type="ChEBI" id="CHEBI:30616"/>
    </ligand>
</feature>
<feature type="binding site" evidence="1">
    <location>
        <position position="550"/>
    </location>
    <ligand>
        <name>Mg(2+)</name>
        <dbReference type="ChEBI" id="CHEBI:18420"/>
    </ligand>
</feature>
<feature type="binding site" evidence="1">
    <location>
        <position position="555"/>
    </location>
    <ligand>
        <name>Mg(2+)</name>
        <dbReference type="ChEBI" id="CHEBI:18420"/>
    </ligand>
</feature>
<feature type="modified residue" description="N6-acetyllysine" evidence="1">
    <location>
        <position position="625"/>
    </location>
</feature>
<name>ACSA_HERAR</name>
<evidence type="ECO:0000255" key="1">
    <source>
        <dbReference type="HAMAP-Rule" id="MF_01123"/>
    </source>
</evidence>